<evidence type="ECO:0000250" key="1">
    <source>
        <dbReference type="UniProtKB" id="Q8N4H5"/>
    </source>
</evidence>
<evidence type="ECO:0000255" key="2"/>
<evidence type="ECO:0000312" key="3">
    <source>
        <dbReference type="EMBL" id="AAI08222.1"/>
    </source>
</evidence>
<proteinExistence type="inferred from homology"/>
<dbReference type="EMBL" id="BC108221">
    <property type="protein sequence ID" value="AAI08222.1"/>
    <property type="molecule type" value="mRNA"/>
</dbReference>
<dbReference type="RefSeq" id="NP_001137212.1">
    <property type="nucleotide sequence ID" value="NM_001143740.1"/>
</dbReference>
<dbReference type="SMR" id="A8YXZ8"/>
<dbReference type="FunCoup" id="A8YXZ8">
    <property type="interactions" value="1192"/>
</dbReference>
<dbReference type="STRING" id="9913.ENSBTAP00000049391"/>
<dbReference type="PaxDb" id="9913-ENSBTAP00000049391"/>
<dbReference type="Ensembl" id="ENSBTAT00000046547.3">
    <property type="protein sequence ID" value="ENSBTAP00000049391.1"/>
    <property type="gene ID" value="ENSBTAG00000032777.3"/>
</dbReference>
<dbReference type="GeneID" id="615897"/>
<dbReference type="KEGG" id="bta:615897"/>
<dbReference type="CTD" id="401505"/>
<dbReference type="VEuPathDB" id="HostDB:ENSBTAG00000032777"/>
<dbReference type="eggNOG" id="ENOG502S99E">
    <property type="taxonomic scope" value="Eukaryota"/>
</dbReference>
<dbReference type="GeneTree" id="ENSGT00940000163364"/>
<dbReference type="HOGENOM" id="CLU_182400_2_0_1"/>
<dbReference type="InParanoid" id="A8YXZ8"/>
<dbReference type="OMA" id="QIYCSSE"/>
<dbReference type="OrthoDB" id="8893106at2759"/>
<dbReference type="Reactome" id="R-BTA-5205685">
    <property type="pathway name" value="PINK1-PRKN Mediated Mitophagy"/>
</dbReference>
<dbReference type="Proteomes" id="UP000009136">
    <property type="component" value="Chromosome 8"/>
</dbReference>
<dbReference type="Bgee" id="ENSBTAG00000032777">
    <property type="expression patterns" value="Expressed in diaphragm and 106 other cell types or tissues"/>
</dbReference>
<dbReference type="GO" id="GO:0005742">
    <property type="term" value="C:mitochondrial outer membrane translocase complex"/>
    <property type="evidence" value="ECO:0000250"/>
    <property type="project" value="UniProtKB"/>
</dbReference>
<dbReference type="GO" id="GO:0006626">
    <property type="term" value="P:protein targeting to mitochondrion"/>
    <property type="evidence" value="ECO:0000305"/>
    <property type="project" value="UniProtKB"/>
</dbReference>
<dbReference type="GO" id="GO:0015031">
    <property type="term" value="P:protein transport"/>
    <property type="evidence" value="ECO:0007669"/>
    <property type="project" value="UniProtKB-KW"/>
</dbReference>
<dbReference type="InterPro" id="IPR019603">
    <property type="entry name" value="Tom5"/>
</dbReference>
<dbReference type="InterPro" id="IPR029179">
    <property type="entry name" value="TOMM5_metazoa"/>
</dbReference>
<dbReference type="PANTHER" id="PTHR28436">
    <property type="entry name" value="MITOCHONDRIAL IMPORT RECEPTOR SUBUNIT TOM5 HOMOLOG"/>
    <property type="match status" value="1"/>
</dbReference>
<dbReference type="PANTHER" id="PTHR28436:SF1">
    <property type="entry name" value="MITOCHONDRIAL IMPORT RECEPTOR SUBUNIT TOM5 HOMOLOG"/>
    <property type="match status" value="1"/>
</dbReference>
<dbReference type="Pfam" id="PF10642">
    <property type="entry name" value="Tom5"/>
    <property type="match status" value="1"/>
</dbReference>
<accession>A8YXZ8</accession>
<sequence length="51" mass="6035">MFRIEGLAPKLDPEEMKRKMREDVISSIRNFLIYVALLRVTPFILKKLDSI</sequence>
<keyword id="KW-0007">Acetylation</keyword>
<keyword id="KW-1017">Isopeptide bond</keyword>
<keyword id="KW-0472">Membrane</keyword>
<keyword id="KW-0496">Mitochondrion</keyword>
<keyword id="KW-1000">Mitochondrion outer membrane</keyword>
<keyword id="KW-0653">Protein transport</keyword>
<keyword id="KW-1185">Reference proteome</keyword>
<keyword id="KW-0812">Transmembrane</keyword>
<keyword id="KW-1133">Transmembrane helix</keyword>
<keyword id="KW-0813">Transport</keyword>
<keyword id="KW-0832">Ubl conjugation</keyword>
<comment type="subunit">
    <text evidence="1">Forms part of the preprotein translocase complex of the outer mitochondrial membrane (TOM complex) which consists of at least 7 different proteins (TOMM5, TOMM6, TOMM7, TOMM20, TOMM22, TOMM40 and TOMM70).</text>
</comment>
<comment type="subcellular location">
    <subcellularLocation>
        <location evidence="1">Mitochondrion outer membrane</location>
        <topology evidence="1">Single-pass membrane protein</topology>
    </subcellularLocation>
</comment>
<comment type="similarity">
    <text evidence="2">Belongs to the Tom5 family.</text>
</comment>
<reference evidence="3" key="1">
    <citation type="submission" date="2005-10" db="EMBL/GenBank/DDBJ databases">
        <authorList>
            <consortium name="NIH - Mammalian Gene Collection (MGC) project"/>
        </authorList>
    </citation>
    <scope>NUCLEOTIDE SEQUENCE [LARGE SCALE MRNA]</scope>
    <source>
        <strain evidence="3">Crossbred X Angus</strain>
        <tissue evidence="3">Liver</tissue>
    </source>
</reference>
<feature type="chain" id="PRO_0000351150" description="Mitochondrial import receptor subunit TOM5 homolog">
    <location>
        <begin position="1"/>
        <end position="51"/>
    </location>
</feature>
<feature type="transmembrane region" description="Helical" evidence="2">
    <location>
        <begin position="27"/>
        <end position="45"/>
    </location>
</feature>
<feature type="modified residue" description="N-acetylmethionine" evidence="1">
    <location>
        <position position="1"/>
    </location>
</feature>
<feature type="cross-link" description="Glycyl lysine isopeptide (Lys-Gly) (interchain with G-Cter in SUMO2)" evidence="1">
    <location>
        <position position="10"/>
    </location>
</feature>
<organism>
    <name type="scientific">Bos taurus</name>
    <name type="common">Bovine</name>
    <dbReference type="NCBI Taxonomy" id="9913"/>
    <lineage>
        <taxon>Eukaryota</taxon>
        <taxon>Metazoa</taxon>
        <taxon>Chordata</taxon>
        <taxon>Craniata</taxon>
        <taxon>Vertebrata</taxon>
        <taxon>Euteleostomi</taxon>
        <taxon>Mammalia</taxon>
        <taxon>Eutheria</taxon>
        <taxon>Laurasiatheria</taxon>
        <taxon>Artiodactyla</taxon>
        <taxon>Ruminantia</taxon>
        <taxon>Pecora</taxon>
        <taxon>Bovidae</taxon>
        <taxon>Bovinae</taxon>
        <taxon>Bos</taxon>
    </lineage>
</organism>
<name>TOM5_BOVIN</name>
<protein>
    <recommendedName>
        <fullName evidence="1">Mitochondrial import receptor subunit TOM5 homolog</fullName>
    </recommendedName>
</protein>
<gene>
    <name evidence="1" type="primary">TOMM5</name>
    <name evidence="1" type="synonym">TOM5</name>
</gene>